<dbReference type="EMBL" id="CP000744">
    <property type="protein sequence ID" value="ABR86732.1"/>
    <property type="molecule type" value="Genomic_DNA"/>
</dbReference>
<dbReference type="SMR" id="A6UZK9"/>
<dbReference type="KEGG" id="pap:PSPA7_0858"/>
<dbReference type="HOGENOM" id="CLU_135723_6_2_6"/>
<dbReference type="Proteomes" id="UP000001582">
    <property type="component" value="Chromosome"/>
</dbReference>
<dbReference type="GO" id="GO:0005737">
    <property type="term" value="C:cytoplasm"/>
    <property type="evidence" value="ECO:0007669"/>
    <property type="project" value="UniProtKB-ARBA"/>
</dbReference>
<dbReference type="GO" id="GO:1990904">
    <property type="term" value="C:ribonucleoprotein complex"/>
    <property type="evidence" value="ECO:0007669"/>
    <property type="project" value="UniProtKB-KW"/>
</dbReference>
<dbReference type="GO" id="GO:0005840">
    <property type="term" value="C:ribosome"/>
    <property type="evidence" value="ECO:0007669"/>
    <property type="project" value="UniProtKB-KW"/>
</dbReference>
<dbReference type="GO" id="GO:0003735">
    <property type="term" value="F:structural constituent of ribosome"/>
    <property type="evidence" value="ECO:0007669"/>
    <property type="project" value="InterPro"/>
</dbReference>
<dbReference type="GO" id="GO:0006412">
    <property type="term" value="P:translation"/>
    <property type="evidence" value="ECO:0007669"/>
    <property type="project" value="UniProtKB-UniRule"/>
</dbReference>
<dbReference type="HAMAP" id="MF_00251">
    <property type="entry name" value="Ribosomal_bL36"/>
    <property type="match status" value="1"/>
</dbReference>
<dbReference type="InterPro" id="IPR000473">
    <property type="entry name" value="Ribosomal_bL36"/>
</dbReference>
<dbReference type="InterPro" id="IPR035977">
    <property type="entry name" value="Ribosomal_bL36_sp"/>
</dbReference>
<dbReference type="NCBIfam" id="TIGR01022">
    <property type="entry name" value="rpmJ_bact"/>
    <property type="match status" value="1"/>
</dbReference>
<dbReference type="PANTHER" id="PTHR42888">
    <property type="entry name" value="50S RIBOSOMAL PROTEIN L36, CHLOROPLASTIC"/>
    <property type="match status" value="1"/>
</dbReference>
<dbReference type="PANTHER" id="PTHR42888:SF1">
    <property type="entry name" value="LARGE RIBOSOMAL SUBUNIT PROTEIN BL36C"/>
    <property type="match status" value="1"/>
</dbReference>
<dbReference type="Pfam" id="PF00444">
    <property type="entry name" value="Ribosomal_L36"/>
    <property type="match status" value="1"/>
</dbReference>
<dbReference type="SUPFAM" id="SSF57840">
    <property type="entry name" value="Ribosomal protein L36"/>
    <property type="match status" value="1"/>
</dbReference>
<dbReference type="PROSITE" id="PS00828">
    <property type="entry name" value="RIBOSOMAL_L36"/>
    <property type="match status" value="1"/>
</dbReference>
<feature type="chain" id="PRO_0000344703" description="Large ribosomal subunit protein bL36A">
    <location>
        <begin position="1"/>
        <end position="38"/>
    </location>
</feature>
<evidence type="ECO:0000255" key="1">
    <source>
        <dbReference type="HAMAP-Rule" id="MF_00251"/>
    </source>
</evidence>
<evidence type="ECO:0000305" key="2"/>
<protein>
    <recommendedName>
        <fullName evidence="1">Large ribosomal subunit protein bL36A</fullName>
    </recommendedName>
    <alternativeName>
        <fullName evidence="2">50S ribosomal protein L36 1</fullName>
    </alternativeName>
</protein>
<sequence>MKVRASVKKLCRNCKIIRRDGIVRVICSAEPRHKQRQG</sequence>
<name>RL361_PSEP7</name>
<keyword id="KW-0687">Ribonucleoprotein</keyword>
<keyword id="KW-0689">Ribosomal protein</keyword>
<proteinExistence type="inferred from homology"/>
<comment type="similarity">
    <text evidence="1">Belongs to the bacterial ribosomal protein bL36 family.</text>
</comment>
<organism>
    <name type="scientific">Pseudomonas paraeruginosa (strain DSM 24068 / PA7)</name>
    <name type="common">Pseudomonas aeruginosa (strain PA7)</name>
    <dbReference type="NCBI Taxonomy" id="381754"/>
    <lineage>
        <taxon>Bacteria</taxon>
        <taxon>Pseudomonadati</taxon>
        <taxon>Pseudomonadota</taxon>
        <taxon>Gammaproteobacteria</taxon>
        <taxon>Pseudomonadales</taxon>
        <taxon>Pseudomonadaceae</taxon>
        <taxon>Pseudomonas</taxon>
        <taxon>Pseudomonas paraeruginosa</taxon>
    </lineage>
</organism>
<reference key="1">
    <citation type="submission" date="2007-06" db="EMBL/GenBank/DDBJ databases">
        <authorList>
            <person name="Dodson R.J."/>
            <person name="Harkins D."/>
            <person name="Paulsen I.T."/>
        </authorList>
    </citation>
    <scope>NUCLEOTIDE SEQUENCE [LARGE SCALE GENOMIC DNA]</scope>
    <source>
        <strain>DSM 24068 / PA7</strain>
    </source>
</reference>
<gene>
    <name evidence="1" type="primary">rpmJ1</name>
    <name type="ordered locus">PSPA7_0858</name>
</gene>
<accession>A6UZK9</accession>